<protein>
    <recommendedName>
        <fullName evidence="1">Glycerol-3-phosphate dehydrogenase [NAD(P)+]</fullName>
        <ecNumber evidence="1">1.1.1.94</ecNumber>
    </recommendedName>
    <alternativeName>
        <fullName evidence="1">NAD(P)(+)-dependent glycerol-3-phosphate dehydrogenase</fullName>
    </alternativeName>
    <alternativeName>
        <fullName evidence="1">NAD(P)H-dependent dihydroxyacetone-phosphate reductase</fullName>
    </alternativeName>
</protein>
<organism>
    <name type="scientific">Blochmanniella pennsylvanica (strain BPEN)</name>
    <dbReference type="NCBI Taxonomy" id="291272"/>
    <lineage>
        <taxon>Bacteria</taxon>
        <taxon>Pseudomonadati</taxon>
        <taxon>Pseudomonadota</taxon>
        <taxon>Gammaproteobacteria</taxon>
        <taxon>Enterobacterales</taxon>
        <taxon>Enterobacteriaceae</taxon>
        <taxon>ant endosymbionts</taxon>
        <taxon>Candidatus Blochmanniella</taxon>
    </lineage>
</organism>
<dbReference type="EC" id="1.1.1.94" evidence="1"/>
<dbReference type="EMBL" id="CP000016">
    <property type="protein sequence ID" value="AAZ41224.1"/>
    <property type="molecule type" value="Genomic_DNA"/>
</dbReference>
<dbReference type="RefSeq" id="WP_011283135.1">
    <property type="nucleotide sequence ID" value="NC_007292.1"/>
</dbReference>
<dbReference type="SMR" id="Q491Y0"/>
<dbReference type="STRING" id="291272.BPEN_626"/>
<dbReference type="KEGG" id="bpn:BPEN_626"/>
<dbReference type="eggNOG" id="COG0240">
    <property type="taxonomic scope" value="Bacteria"/>
</dbReference>
<dbReference type="HOGENOM" id="CLU_033449_0_2_6"/>
<dbReference type="OrthoDB" id="9812273at2"/>
<dbReference type="UniPathway" id="UPA00940"/>
<dbReference type="Proteomes" id="UP000007794">
    <property type="component" value="Chromosome"/>
</dbReference>
<dbReference type="GO" id="GO:0005829">
    <property type="term" value="C:cytosol"/>
    <property type="evidence" value="ECO:0007669"/>
    <property type="project" value="TreeGrafter"/>
</dbReference>
<dbReference type="GO" id="GO:0047952">
    <property type="term" value="F:glycerol-3-phosphate dehydrogenase [NAD(P)+] activity"/>
    <property type="evidence" value="ECO:0007669"/>
    <property type="project" value="UniProtKB-UniRule"/>
</dbReference>
<dbReference type="GO" id="GO:0051287">
    <property type="term" value="F:NAD binding"/>
    <property type="evidence" value="ECO:0007669"/>
    <property type="project" value="InterPro"/>
</dbReference>
<dbReference type="GO" id="GO:0005975">
    <property type="term" value="P:carbohydrate metabolic process"/>
    <property type="evidence" value="ECO:0007669"/>
    <property type="project" value="InterPro"/>
</dbReference>
<dbReference type="GO" id="GO:0046167">
    <property type="term" value="P:glycerol-3-phosphate biosynthetic process"/>
    <property type="evidence" value="ECO:0007669"/>
    <property type="project" value="UniProtKB-UniRule"/>
</dbReference>
<dbReference type="GO" id="GO:0046168">
    <property type="term" value="P:glycerol-3-phosphate catabolic process"/>
    <property type="evidence" value="ECO:0007669"/>
    <property type="project" value="InterPro"/>
</dbReference>
<dbReference type="GO" id="GO:0046474">
    <property type="term" value="P:glycerophospholipid biosynthetic process"/>
    <property type="evidence" value="ECO:0007669"/>
    <property type="project" value="TreeGrafter"/>
</dbReference>
<dbReference type="FunFam" id="1.10.1040.10:FF:000001">
    <property type="entry name" value="Glycerol-3-phosphate dehydrogenase [NAD(P)+]"/>
    <property type="match status" value="1"/>
</dbReference>
<dbReference type="FunFam" id="3.40.50.720:FF:000019">
    <property type="entry name" value="Glycerol-3-phosphate dehydrogenase [NAD(P)+]"/>
    <property type="match status" value="1"/>
</dbReference>
<dbReference type="Gene3D" id="1.10.1040.10">
    <property type="entry name" value="N-(1-d-carboxylethyl)-l-norvaline Dehydrogenase, domain 2"/>
    <property type="match status" value="1"/>
</dbReference>
<dbReference type="Gene3D" id="3.40.50.720">
    <property type="entry name" value="NAD(P)-binding Rossmann-like Domain"/>
    <property type="match status" value="1"/>
</dbReference>
<dbReference type="HAMAP" id="MF_00394">
    <property type="entry name" value="NAD_Glyc3P_dehydrog"/>
    <property type="match status" value="1"/>
</dbReference>
<dbReference type="InterPro" id="IPR008927">
    <property type="entry name" value="6-PGluconate_DH-like_C_sf"/>
</dbReference>
<dbReference type="InterPro" id="IPR013328">
    <property type="entry name" value="6PGD_dom2"/>
</dbReference>
<dbReference type="InterPro" id="IPR006168">
    <property type="entry name" value="G3P_DH_NAD-dep"/>
</dbReference>
<dbReference type="InterPro" id="IPR006109">
    <property type="entry name" value="G3P_DH_NAD-dep_C"/>
</dbReference>
<dbReference type="InterPro" id="IPR011128">
    <property type="entry name" value="G3P_DH_NAD-dep_N"/>
</dbReference>
<dbReference type="InterPro" id="IPR036291">
    <property type="entry name" value="NAD(P)-bd_dom_sf"/>
</dbReference>
<dbReference type="NCBIfam" id="NF000939">
    <property type="entry name" value="PRK00094.1-1"/>
    <property type="match status" value="1"/>
</dbReference>
<dbReference type="NCBIfam" id="NF000940">
    <property type="entry name" value="PRK00094.1-2"/>
    <property type="match status" value="1"/>
</dbReference>
<dbReference type="NCBIfam" id="NF000942">
    <property type="entry name" value="PRK00094.1-4"/>
    <property type="match status" value="1"/>
</dbReference>
<dbReference type="PANTHER" id="PTHR11728">
    <property type="entry name" value="GLYCEROL-3-PHOSPHATE DEHYDROGENASE"/>
    <property type="match status" value="1"/>
</dbReference>
<dbReference type="PANTHER" id="PTHR11728:SF1">
    <property type="entry name" value="GLYCEROL-3-PHOSPHATE DEHYDROGENASE [NAD(+)] 2, CHLOROPLASTIC"/>
    <property type="match status" value="1"/>
</dbReference>
<dbReference type="Pfam" id="PF07479">
    <property type="entry name" value="NAD_Gly3P_dh_C"/>
    <property type="match status" value="1"/>
</dbReference>
<dbReference type="Pfam" id="PF01210">
    <property type="entry name" value="NAD_Gly3P_dh_N"/>
    <property type="match status" value="1"/>
</dbReference>
<dbReference type="PIRSF" id="PIRSF000114">
    <property type="entry name" value="Glycerol-3-P_dh"/>
    <property type="match status" value="1"/>
</dbReference>
<dbReference type="PRINTS" id="PR00077">
    <property type="entry name" value="GPDHDRGNASE"/>
</dbReference>
<dbReference type="SUPFAM" id="SSF48179">
    <property type="entry name" value="6-phosphogluconate dehydrogenase C-terminal domain-like"/>
    <property type="match status" value="1"/>
</dbReference>
<dbReference type="SUPFAM" id="SSF51735">
    <property type="entry name" value="NAD(P)-binding Rossmann-fold domains"/>
    <property type="match status" value="1"/>
</dbReference>
<dbReference type="PROSITE" id="PS00957">
    <property type="entry name" value="NAD_G3PDH"/>
    <property type="match status" value="1"/>
</dbReference>
<sequence>MSIKYPKYPNITIIGAGSYGTAIAIALSRNGHSVLLWGHNAIHIQKLQINRCNQAYLPGIAFPPSLYLEKSLSIALSTCRNLLIAVPSRVFGHVLMRLKPNLKSNTRIIIASKGLEPKTGRLLQDVAYDILGKNIPIAIISGPTFARELAMGLPTAITLASNDTILSCDLQNILHCNKNFRIYSNTDTIGIQIAGVVKNIIAIGAGISDGIGFGSNARTALITRGLVEMSRLGIAIGATLDTFMGLAGLGDLILTCTDNQSRNRRFGILLGQGFEIHHAQKNVGKIIEGFYNIKEVYMLSVKHKVDMPITEQTYQILYQNKNVHDAAHSLLERTQKEEKINGLK</sequence>
<comment type="function">
    <text evidence="1">Catalyzes the reduction of the glycolytic intermediate dihydroxyacetone phosphate (DHAP) to sn-glycerol 3-phosphate (G3P), the key precursor for phospholipid synthesis.</text>
</comment>
<comment type="catalytic activity">
    <reaction evidence="1">
        <text>sn-glycerol 3-phosphate + NAD(+) = dihydroxyacetone phosphate + NADH + H(+)</text>
        <dbReference type="Rhea" id="RHEA:11092"/>
        <dbReference type="ChEBI" id="CHEBI:15378"/>
        <dbReference type="ChEBI" id="CHEBI:57540"/>
        <dbReference type="ChEBI" id="CHEBI:57597"/>
        <dbReference type="ChEBI" id="CHEBI:57642"/>
        <dbReference type="ChEBI" id="CHEBI:57945"/>
        <dbReference type="EC" id="1.1.1.94"/>
    </reaction>
    <physiologicalReaction direction="right-to-left" evidence="1">
        <dbReference type="Rhea" id="RHEA:11094"/>
    </physiologicalReaction>
</comment>
<comment type="catalytic activity">
    <reaction evidence="1">
        <text>sn-glycerol 3-phosphate + NADP(+) = dihydroxyacetone phosphate + NADPH + H(+)</text>
        <dbReference type="Rhea" id="RHEA:11096"/>
        <dbReference type="ChEBI" id="CHEBI:15378"/>
        <dbReference type="ChEBI" id="CHEBI:57597"/>
        <dbReference type="ChEBI" id="CHEBI:57642"/>
        <dbReference type="ChEBI" id="CHEBI:57783"/>
        <dbReference type="ChEBI" id="CHEBI:58349"/>
        <dbReference type="EC" id="1.1.1.94"/>
    </reaction>
    <physiologicalReaction direction="right-to-left" evidence="1">
        <dbReference type="Rhea" id="RHEA:11098"/>
    </physiologicalReaction>
</comment>
<comment type="pathway">
    <text evidence="1">Membrane lipid metabolism; glycerophospholipid metabolism.</text>
</comment>
<comment type="subcellular location">
    <subcellularLocation>
        <location evidence="1">Cytoplasm</location>
    </subcellularLocation>
</comment>
<comment type="similarity">
    <text evidence="1">Belongs to the NAD-dependent glycerol-3-phosphate dehydrogenase family.</text>
</comment>
<reference key="1">
    <citation type="journal article" date="2005" name="Genome Res.">
        <title>Genome sequence of Blochmannia pennsylvanicus indicates parallel evolutionary trends among bacterial mutualists of insects.</title>
        <authorList>
            <person name="Degnan P.H."/>
            <person name="Lazarus A.B."/>
            <person name="Wernegreen J.J."/>
        </authorList>
    </citation>
    <scope>NUCLEOTIDE SEQUENCE [LARGE SCALE GENOMIC DNA]</scope>
    <source>
        <strain>BPEN</strain>
    </source>
</reference>
<gene>
    <name evidence="1" type="primary">gpsA</name>
    <name type="ordered locus">BPEN_626</name>
</gene>
<name>GPDA_BLOPB</name>
<accession>Q491Y0</accession>
<feature type="chain" id="PRO_0000255284" description="Glycerol-3-phosphate dehydrogenase [NAD(P)+]">
    <location>
        <begin position="1"/>
        <end position="344"/>
    </location>
</feature>
<feature type="active site" description="Proton acceptor" evidence="1">
    <location>
        <position position="198"/>
    </location>
</feature>
<feature type="binding site" evidence="1">
    <location>
        <position position="18"/>
    </location>
    <ligand>
        <name>NADPH</name>
        <dbReference type="ChEBI" id="CHEBI:57783"/>
    </ligand>
</feature>
<feature type="binding site" evidence="1">
    <location>
        <position position="19"/>
    </location>
    <ligand>
        <name>NADPH</name>
        <dbReference type="ChEBI" id="CHEBI:57783"/>
    </ligand>
</feature>
<feature type="binding site" evidence="1">
    <location>
        <position position="39"/>
    </location>
    <ligand>
        <name>NADPH</name>
        <dbReference type="ChEBI" id="CHEBI:57783"/>
    </ligand>
</feature>
<feature type="binding site" evidence="1">
    <location>
        <position position="113"/>
    </location>
    <ligand>
        <name>NADPH</name>
        <dbReference type="ChEBI" id="CHEBI:57783"/>
    </ligand>
</feature>
<feature type="binding site" evidence="1">
    <location>
        <position position="113"/>
    </location>
    <ligand>
        <name>sn-glycerol 3-phosphate</name>
        <dbReference type="ChEBI" id="CHEBI:57597"/>
    </ligand>
</feature>
<feature type="binding site" evidence="1">
    <location>
        <position position="142"/>
    </location>
    <ligand>
        <name>sn-glycerol 3-phosphate</name>
        <dbReference type="ChEBI" id="CHEBI:57597"/>
    </ligand>
</feature>
<feature type="binding site" evidence="1">
    <location>
        <position position="144"/>
    </location>
    <ligand>
        <name>sn-glycerol 3-phosphate</name>
        <dbReference type="ChEBI" id="CHEBI:57597"/>
    </ligand>
</feature>
<feature type="binding site" evidence="1">
    <location>
        <position position="146"/>
    </location>
    <ligand>
        <name>NADPH</name>
        <dbReference type="ChEBI" id="CHEBI:57783"/>
    </ligand>
</feature>
<feature type="binding site" evidence="1">
    <location>
        <position position="198"/>
    </location>
    <ligand>
        <name>sn-glycerol 3-phosphate</name>
        <dbReference type="ChEBI" id="CHEBI:57597"/>
    </ligand>
</feature>
<feature type="binding site" evidence="1">
    <location>
        <position position="251"/>
    </location>
    <ligand>
        <name>sn-glycerol 3-phosphate</name>
        <dbReference type="ChEBI" id="CHEBI:57597"/>
    </ligand>
</feature>
<feature type="binding site" evidence="1">
    <location>
        <position position="261"/>
    </location>
    <ligand>
        <name>sn-glycerol 3-phosphate</name>
        <dbReference type="ChEBI" id="CHEBI:57597"/>
    </ligand>
</feature>
<feature type="binding site" evidence="1">
    <location>
        <position position="262"/>
    </location>
    <ligand>
        <name>NADPH</name>
        <dbReference type="ChEBI" id="CHEBI:57783"/>
    </ligand>
</feature>
<feature type="binding site" evidence="1">
    <location>
        <position position="262"/>
    </location>
    <ligand>
        <name>sn-glycerol 3-phosphate</name>
        <dbReference type="ChEBI" id="CHEBI:57597"/>
    </ligand>
</feature>
<feature type="binding site" evidence="1">
    <location>
        <position position="263"/>
    </location>
    <ligand>
        <name>sn-glycerol 3-phosphate</name>
        <dbReference type="ChEBI" id="CHEBI:57597"/>
    </ligand>
</feature>
<feature type="binding site" evidence="1">
    <location>
        <position position="286"/>
    </location>
    <ligand>
        <name>NADPH</name>
        <dbReference type="ChEBI" id="CHEBI:57783"/>
    </ligand>
</feature>
<feature type="binding site" evidence="1">
    <location>
        <position position="288"/>
    </location>
    <ligand>
        <name>NADPH</name>
        <dbReference type="ChEBI" id="CHEBI:57783"/>
    </ligand>
</feature>
<proteinExistence type="inferred from homology"/>
<keyword id="KW-0963">Cytoplasm</keyword>
<keyword id="KW-0444">Lipid biosynthesis</keyword>
<keyword id="KW-0443">Lipid metabolism</keyword>
<keyword id="KW-0520">NAD</keyword>
<keyword id="KW-0521">NADP</keyword>
<keyword id="KW-0547">Nucleotide-binding</keyword>
<keyword id="KW-0560">Oxidoreductase</keyword>
<keyword id="KW-0594">Phospholipid biosynthesis</keyword>
<keyword id="KW-1208">Phospholipid metabolism</keyword>
<keyword id="KW-1185">Reference proteome</keyword>
<evidence type="ECO:0000255" key="1">
    <source>
        <dbReference type="HAMAP-Rule" id="MF_00394"/>
    </source>
</evidence>